<feature type="chain" id="PRO_1000015586" description="33 kDa chaperonin">
    <location>
        <begin position="1"/>
        <end position="288"/>
    </location>
</feature>
<feature type="disulfide bond" description="Redox-active" evidence="1">
    <location>
        <begin position="235"/>
        <end position="237"/>
    </location>
</feature>
<feature type="disulfide bond" description="Redox-active" evidence="1">
    <location>
        <begin position="268"/>
        <end position="271"/>
    </location>
</feature>
<accession>Q03MM5</accession>
<gene>
    <name evidence="1" type="primary">hslO</name>
    <name type="ordered locus">STER_0230</name>
</gene>
<reference key="1">
    <citation type="journal article" date="2006" name="Proc. Natl. Acad. Sci. U.S.A.">
        <title>Comparative genomics of the lactic acid bacteria.</title>
        <authorList>
            <person name="Makarova K.S."/>
            <person name="Slesarev A."/>
            <person name="Wolf Y.I."/>
            <person name="Sorokin A."/>
            <person name="Mirkin B."/>
            <person name="Koonin E.V."/>
            <person name="Pavlov A."/>
            <person name="Pavlova N."/>
            <person name="Karamychev V."/>
            <person name="Polouchine N."/>
            <person name="Shakhova V."/>
            <person name="Grigoriev I."/>
            <person name="Lou Y."/>
            <person name="Rohksar D."/>
            <person name="Lucas S."/>
            <person name="Huang K."/>
            <person name="Goodstein D.M."/>
            <person name="Hawkins T."/>
            <person name="Plengvidhya V."/>
            <person name="Welker D."/>
            <person name="Hughes J."/>
            <person name="Goh Y."/>
            <person name="Benson A."/>
            <person name="Baldwin K."/>
            <person name="Lee J.-H."/>
            <person name="Diaz-Muniz I."/>
            <person name="Dosti B."/>
            <person name="Smeianov V."/>
            <person name="Wechter W."/>
            <person name="Barabote R."/>
            <person name="Lorca G."/>
            <person name="Altermann E."/>
            <person name="Barrangou R."/>
            <person name="Ganesan B."/>
            <person name="Xie Y."/>
            <person name="Rawsthorne H."/>
            <person name="Tamir D."/>
            <person name="Parker C."/>
            <person name="Breidt F."/>
            <person name="Broadbent J.R."/>
            <person name="Hutkins R."/>
            <person name="O'Sullivan D."/>
            <person name="Steele J."/>
            <person name="Unlu G."/>
            <person name="Saier M.H. Jr."/>
            <person name="Klaenhammer T."/>
            <person name="Richardson P."/>
            <person name="Kozyavkin S."/>
            <person name="Weimer B.C."/>
            <person name="Mills D.A."/>
        </authorList>
    </citation>
    <scope>NUCLEOTIDE SEQUENCE [LARGE SCALE GENOMIC DNA]</scope>
    <source>
        <strain>ATCC BAA-491 / LMD-9</strain>
    </source>
</reference>
<protein>
    <recommendedName>
        <fullName evidence="1">33 kDa chaperonin</fullName>
    </recommendedName>
    <alternativeName>
        <fullName evidence="1">Heat shock protein 33 homolog</fullName>
        <shortName evidence="1">HSP33</shortName>
    </alternativeName>
</protein>
<keyword id="KW-0143">Chaperone</keyword>
<keyword id="KW-0963">Cytoplasm</keyword>
<keyword id="KW-1015">Disulfide bond</keyword>
<keyword id="KW-0676">Redox-active center</keyword>
<keyword id="KW-0862">Zinc</keyword>
<sequence>MDKLIKTISESGSFRAYALDSTETVRTAQEKHNTLSSSTVALGRTLIANQILAANQKGDSKITVKVIGNGSFGHIISVADTKGHVKGYIQNPGVDIKKTATGEVLVGPFMGQGQFVSIIDYGTGNPYTSSTPLISGEIGEDFAYYLTESEQTPSAVGLNVLLDKEDKVKVAGGFMLQVLPGASEEEIARYEKRIQEMPAISTLLESDDHIEALLNAIYGDEPFKRLSEEELSFECDCSRERFENALLTLGKDELQAMKDEDHGAEIVCQFCQTKYEFSEADLEELIND</sequence>
<comment type="function">
    <text evidence="1">Redox regulated molecular chaperone. Protects both thermally unfolding and oxidatively damaged proteins from irreversible aggregation. Plays an important role in the bacterial defense system toward oxidative stress.</text>
</comment>
<comment type="subcellular location">
    <subcellularLocation>
        <location evidence="1">Cytoplasm</location>
    </subcellularLocation>
</comment>
<comment type="PTM">
    <text evidence="1">Under oxidizing conditions two disulfide bonds are formed involving the reactive cysteines. Under reducing conditions zinc is bound to the reactive cysteines and the protein is inactive.</text>
</comment>
<comment type="similarity">
    <text evidence="1">Belongs to the HSP33 family.</text>
</comment>
<name>HSLO_STRTD</name>
<evidence type="ECO:0000255" key="1">
    <source>
        <dbReference type="HAMAP-Rule" id="MF_00117"/>
    </source>
</evidence>
<dbReference type="EMBL" id="CP000419">
    <property type="protein sequence ID" value="ABJ65547.1"/>
    <property type="molecule type" value="Genomic_DNA"/>
</dbReference>
<dbReference type="RefSeq" id="WP_002949275.1">
    <property type="nucleotide sequence ID" value="NZ_CP086001.1"/>
</dbReference>
<dbReference type="SMR" id="Q03MM5"/>
<dbReference type="KEGG" id="ste:STER_0230"/>
<dbReference type="HOGENOM" id="CLU_054493_1_0_9"/>
<dbReference type="GO" id="GO:0005737">
    <property type="term" value="C:cytoplasm"/>
    <property type="evidence" value="ECO:0007669"/>
    <property type="project" value="UniProtKB-SubCell"/>
</dbReference>
<dbReference type="GO" id="GO:0044183">
    <property type="term" value="F:protein folding chaperone"/>
    <property type="evidence" value="ECO:0007669"/>
    <property type="project" value="TreeGrafter"/>
</dbReference>
<dbReference type="GO" id="GO:0051082">
    <property type="term" value="F:unfolded protein binding"/>
    <property type="evidence" value="ECO:0007669"/>
    <property type="project" value="UniProtKB-UniRule"/>
</dbReference>
<dbReference type="GO" id="GO:0042026">
    <property type="term" value="P:protein refolding"/>
    <property type="evidence" value="ECO:0007669"/>
    <property type="project" value="TreeGrafter"/>
</dbReference>
<dbReference type="CDD" id="cd00498">
    <property type="entry name" value="Hsp33"/>
    <property type="match status" value="1"/>
</dbReference>
<dbReference type="Gene3D" id="3.55.30.10">
    <property type="entry name" value="Hsp33 domain"/>
    <property type="match status" value="1"/>
</dbReference>
<dbReference type="Gene3D" id="3.90.1280.10">
    <property type="entry name" value="HSP33 redox switch-like"/>
    <property type="match status" value="1"/>
</dbReference>
<dbReference type="HAMAP" id="MF_00117">
    <property type="entry name" value="HslO"/>
    <property type="match status" value="1"/>
</dbReference>
<dbReference type="InterPro" id="IPR000397">
    <property type="entry name" value="Heat_shock_Hsp33"/>
</dbReference>
<dbReference type="InterPro" id="IPR016154">
    <property type="entry name" value="Heat_shock_Hsp33_C"/>
</dbReference>
<dbReference type="InterPro" id="IPR016153">
    <property type="entry name" value="Heat_shock_Hsp33_N"/>
</dbReference>
<dbReference type="NCBIfam" id="NF001033">
    <property type="entry name" value="PRK00114.1"/>
    <property type="match status" value="1"/>
</dbReference>
<dbReference type="PANTHER" id="PTHR30111">
    <property type="entry name" value="33 KDA CHAPERONIN"/>
    <property type="match status" value="1"/>
</dbReference>
<dbReference type="PANTHER" id="PTHR30111:SF1">
    <property type="entry name" value="33 KDA CHAPERONIN"/>
    <property type="match status" value="1"/>
</dbReference>
<dbReference type="Pfam" id="PF01430">
    <property type="entry name" value="HSP33"/>
    <property type="match status" value="1"/>
</dbReference>
<dbReference type="PIRSF" id="PIRSF005261">
    <property type="entry name" value="Heat_shock_Hsp33"/>
    <property type="match status" value="1"/>
</dbReference>
<dbReference type="SUPFAM" id="SSF64397">
    <property type="entry name" value="Hsp33 domain"/>
    <property type="match status" value="1"/>
</dbReference>
<dbReference type="SUPFAM" id="SSF118352">
    <property type="entry name" value="HSP33 redox switch-like"/>
    <property type="match status" value="1"/>
</dbReference>
<proteinExistence type="inferred from homology"/>
<organism>
    <name type="scientific">Streptococcus thermophilus (strain ATCC BAA-491 / LMD-9)</name>
    <dbReference type="NCBI Taxonomy" id="322159"/>
    <lineage>
        <taxon>Bacteria</taxon>
        <taxon>Bacillati</taxon>
        <taxon>Bacillota</taxon>
        <taxon>Bacilli</taxon>
        <taxon>Lactobacillales</taxon>
        <taxon>Streptococcaceae</taxon>
        <taxon>Streptococcus</taxon>
    </lineage>
</organism>